<gene>
    <name type="ordered locus">At5g22720</name>
    <name type="ORF">MDJ22.14</name>
</gene>
<reference key="1">
    <citation type="journal article" date="1997" name="DNA Res.">
        <title>Structural analysis of Arabidopsis thaliana chromosome 5. II. Sequence features of the regions of 1,044,062 bp covered by thirteen physically assigned P1 clones.</title>
        <authorList>
            <person name="Kotani H."/>
            <person name="Nakamura Y."/>
            <person name="Sato S."/>
            <person name="Kaneko T."/>
            <person name="Asamizu E."/>
            <person name="Miyajima N."/>
            <person name="Tabata S."/>
        </authorList>
    </citation>
    <scope>NUCLEOTIDE SEQUENCE [LARGE SCALE GENOMIC DNA]</scope>
    <source>
        <strain>cv. Columbia</strain>
    </source>
</reference>
<reference key="2">
    <citation type="journal article" date="2017" name="Plant J.">
        <title>Araport11: a complete reannotation of the Arabidopsis thaliana reference genome.</title>
        <authorList>
            <person name="Cheng C.Y."/>
            <person name="Krishnakumar V."/>
            <person name="Chan A.P."/>
            <person name="Thibaud-Nissen F."/>
            <person name="Schobel S."/>
            <person name="Town C.D."/>
        </authorList>
    </citation>
    <scope>GENOME REANNOTATION</scope>
    <source>
        <strain>cv. Columbia</strain>
    </source>
</reference>
<accession>Q9FNI9</accession>
<accession>F4KA00</accession>
<accession>F4KA01</accession>
<feature type="chain" id="PRO_0000283146" description="Putative FBD-associated F-box protein At5g22720">
    <location>
        <begin position="1"/>
        <end position="468"/>
    </location>
</feature>
<feature type="domain" description="F-box" evidence="1">
    <location>
        <begin position="22"/>
        <end position="68"/>
    </location>
</feature>
<feature type="domain" description="FBD">
    <location>
        <begin position="375"/>
        <end position="433"/>
    </location>
</feature>
<comment type="sequence caution" evidence="2">
    <conflict type="erroneous gene model prediction">
        <sequence resource="EMBL-CDS" id="BAB11678"/>
    </conflict>
</comment>
<name>FBD14_ARATH</name>
<proteinExistence type="predicted"/>
<organism>
    <name type="scientific">Arabidopsis thaliana</name>
    <name type="common">Mouse-ear cress</name>
    <dbReference type="NCBI Taxonomy" id="3702"/>
    <lineage>
        <taxon>Eukaryota</taxon>
        <taxon>Viridiplantae</taxon>
        <taxon>Streptophyta</taxon>
        <taxon>Embryophyta</taxon>
        <taxon>Tracheophyta</taxon>
        <taxon>Spermatophyta</taxon>
        <taxon>Magnoliopsida</taxon>
        <taxon>eudicotyledons</taxon>
        <taxon>Gunneridae</taxon>
        <taxon>Pentapetalae</taxon>
        <taxon>rosids</taxon>
        <taxon>malvids</taxon>
        <taxon>Brassicales</taxon>
        <taxon>Brassicaceae</taxon>
        <taxon>Camelineae</taxon>
        <taxon>Arabidopsis</taxon>
    </lineage>
</organism>
<dbReference type="EMBL" id="AB006699">
    <property type="protein sequence ID" value="BAB11678.1"/>
    <property type="status" value="ALT_SEQ"/>
    <property type="molecule type" value="Genomic_DNA"/>
</dbReference>
<dbReference type="EMBL" id="CP002688">
    <property type="protein sequence ID" value="AED93066.2"/>
    <property type="molecule type" value="Genomic_DNA"/>
</dbReference>
<dbReference type="RefSeq" id="NP_001318622.1">
    <property type="nucleotide sequence ID" value="NM_001343756.1"/>
</dbReference>
<dbReference type="FunCoup" id="Q9FNI9">
    <property type="interactions" value="3"/>
</dbReference>
<dbReference type="EnsemblPlants" id="AT5G22720.1">
    <property type="protein sequence ID" value="AT5G22720.1"/>
    <property type="gene ID" value="AT5G22720"/>
</dbReference>
<dbReference type="GeneID" id="28721185"/>
<dbReference type="Gramene" id="AT5G22720.1">
    <property type="protein sequence ID" value="AT5G22720.1"/>
    <property type="gene ID" value="AT5G22720"/>
</dbReference>
<dbReference type="KEGG" id="ath:AT5G22720"/>
<dbReference type="Araport" id="AT5G22720"/>
<dbReference type="TAIR" id="AT5G22720">
    <property type="gene designation" value="FBXL"/>
</dbReference>
<dbReference type="InParanoid" id="Q9FNI9"/>
<dbReference type="OMA" id="CECFEVI"/>
<dbReference type="PRO" id="PR:Q9FNI9"/>
<dbReference type="Proteomes" id="UP000006548">
    <property type="component" value="Chromosome 5"/>
</dbReference>
<dbReference type="ExpressionAtlas" id="Q9FNI9">
    <property type="expression patterns" value="baseline and differential"/>
</dbReference>
<dbReference type="CDD" id="cd22160">
    <property type="entry name" value="F-box_AtFBL13-like"/>
    <property type="match status" value="1"/>
</dbReference>
<dbReference type="Gene3D" id="1.20.1280.50">
    <property type="match status" value="1"/>
</dbReference>
<dbReference type="Gene3D" id="3.80.10.10">
    <property type="entry name" value="Ribonuclease Inhibitor"/>
    <property type="match status" value="1"/>
</dbReference>
<dbReference type="InterPro" id="IPR036047">
    <property type="entry name" value="F-box-like_dom_sf"/>
</dbReference>
<dbReference type="InterPro" id="IPR053781">
    <property type="entry name" value="F-box_AtFBL13-like"/>
</dbReference>
<dbReference type="InterPro" id="IPR001810">
    <property type="entry name" value="F-box_dom"/>
</dbReference>
<dbReference type="InterPro" id="IPR006566">
    <property type="entry name" value="FBD"/>
</dbReference>
<dbReference type="InterPro" id="IPR050232">
    <property type="entry name" value="FBL13/AtMIF1-like"/>
</dbReference>
<dbReference type="InterPro" id="IPR032675">
    <property type="entry name" value="LRR_dom_sf"/>
</dbReference>
<dbReference type="InterPro" id="IPR055411">
    <property type="entry name" value="LRR_FXL15/At3g58940/PEG3-like"/>
</dbReference>
<dbReference type="PANTHER" id="PTHR31900">
    <property type="entry name" value="F-BOX/RNI SUPERFAMILY PROTEIN-RELATED"/>
    <property type="match status" value="1"/>
</dbReference>
<dbReference type="PANTHER" id="PTHR31900:SF25">
    <property type="entry name" value="FBD DOMAIN-CONTAINING PROTEIN"/>
    <property type="match status" value="1"/>
</dbReference>
<dbReference type="Pfam" id="PF00646">
    <property type="entry name" value="F-box"/>
    <property type="match status" value="1"/>
</dbReference>
<dbReference type="Pfam" id="PF08387">
    <property type="entry name" value="FBD"/>
    <property type="match status" value="1"/>
</dbReference>
<dbReference type="Pfam" id="PF24758">
    <property type="entry name" value="LRR_At5g56370"/>
    <property type="match status" value="1"/>
</dbReference>
<dbReference type="SMART" id="SM00579">
    <property type="entry name" value="FBD"/>
    <property type="match status" value="1"/>
</dbReference>
<dbReference type="SUPFAM" id="SSF81383">
    <property type="entry name" value="F-box domain"/>
    <property type="match status" value="1"/>
</dbReference>
<dbReference type="SUPFAM" id="SSF52047">
    <property type="entry name" value="RNI-like"/>
    <property type="match status" value="1"/>
</dbReference>
<dbReference type="PROSITE" id="PS50181">
    <property type="entry name" value="FBOX"/>
    <property type="match status" value="1"/>
</dbReference>
<evidence type="ECO:0000255" key="1">
    <source>
        <dbReference type="PROSITE-ProRule" id="PRU00080"/>
    </source>
</evidence>
<evidence type="ECO:0000305" key="2"/>
<protein>
    <recommendedName>
        <fullName>Putative FBD-associated F-box protein At5g22720</fullName>
    </recommendedName>
</protein>
<sequence length="468" mass="53626">MEETKVKRTCLERTVCSSKAKEDLISQLPDSLITQILFYLQTKKAVTTSVLSKRWRSLWLSTPGLVLISNDFTDYNAFVSFVDKFLGFSREQKLCLHKLKLSIRKGENDQDCVTRWIDFVATPKLKHLDVEIGPTRCECFEVIPLSLYSCESLLYLRLNHVCLGKFESVSLPCLKTMSLEQNIYANEADLESLISTCPVLEDLSFVSGAYDKVNVLRVQSQTLTSLNIEGCVEYLDLDKSEVLIDATRLKYLNLEADQYESKTIRNSGSLTKVNLLGYFHMKNNDDDDEVDLQKRDMVHNFFTSISGVSDMKISSQAFALFIMNTMPFSPKFCNLSCLEVEIFLPSLETLPTFLESFPNLKSLILGLRYWTPKKELRLSFVPRCLLSSLEFVEIKGCSRSNMERVKYVGEPIETKLARYFVENSTILKKLVLPLRSSTPEEIYSVDFWNFLEFPRRSSICQITYVAGL</sequence>
<keyword id="KW-1185">Reference proteome</keyword>